<feature type="chain" id="PRO_0000323807" description="Uridylate kinase">
    <location>
        <begin position="1"/>
        <end position="237"/>
    </location>
</feature>
<feature type="binding site" evidence="1">
    <location>
        <begin position="11"/>
        <end position="14"/>
    </location>
    <ligand>
        <name>ATP</name>
        <dbReference type="ChEBI" id="CHEBI:30616"/>
    </ligand>
</feature>
<feature type="binding site" evidence="1">
    <location>
        <position position="53"/>
    </location>
    <ligand>
        <name>UMP</name>
        <dbReference type="ChEBI" id="CHEBI:57865"/>
    </ligand>
</feature>
<feature type="binding site" evidence="1">
    <location>
        <position position="54"/>
    </location>
    <ligand>
        <name>ATP</name>
        <dbReference type="ChEBI" id="CHEBI:30616"/>
    </ligand>
</feature>
<feature type="binding site" evidence="1">
    <location>
        <position position="58"/>
    </location>
    <ligand>
        <name>ATP</name>
        <dbReference type="ChEBI" id="CHEBI:30616"/>
    </ligand>
</feature>
<feature type="binding site" evidence="1">
    <location>
        <position position="73"/>
    </location>
    <ligand>
        <name>UMP</name>
        <dbReference type="ChEBI" id="CHEBI:57865"/>
    </ligand>
</feature>
<feature type="binding site" evidence="1">
    <location>
        <begin position="134"/>
        <end position="141"/>
    </location>
    <ligand>
        <name>UMP</name>
        <dbReference type="ChEBI" id="CHEBI:57865"/>
    </ligand>
</feature>
<feature type="binding site" evidence="1">
    <location>
        <position position="161"/>
    </location>
    <ligand>
        <name>ATP</name>
        <dbReference type="ChEBI" id="CHEBI:30616"/>
    </ligand>
</feature>
<feature type="binding site" evidence="1">
    <location>
        <position position="167"/>
    </location>
    <ligand>
        <name>ATP</name>
        <dbReference type="ChEBI" id="CHEBI:30616"/>
    </ligand>
</feature>
<feature type="binding site" evidence="1">
    <location>
        <position position="170"/>
    </location>
    <ligand>
        <name>ATP</name>
        <dbReference type="ChEBI" id="CHEBI:30616"/>
    </ligand>
</feature>
<proteinExistence type="inferred from homology"/>
<comment type="function">
    <text evidence="1">Catalyzes the reversible phosphorylation of UMP to UDP.</text>
</comment>
<comment type="catalytic activity">
    <reaction evidence="1">
        <text>UMP + ATP = UDP + ADP</text>
        <dbReference type="Rhea" id="RHEA:24400"/>
        <dbReference type="ChEBI" id="CHEBI:30616"/>
        <dbReference type="ChEBI" id="CHEBI:57865"/>
        <dbReference type="ChEBI" id="CHEBI:58223"/>
        <dbReference type="ChEBI" id="CHEBI:456216"/>
        <dbReference type="EC" id="2.7.4.22"/>
    </reaction>
</comment>
<comment type="activity regulation">
    <text evidence="1">Inhibited by UTP.</text>
</comment>
<comment type="pathway">
    <text evidence="1">Pyrimidine metabolism; CTP biosynthesis via de novo pathway; UDP from UMP (UMPK route): step 1/1.</text>
</comment>
<comment type="subunit">
    <text evidence="1">Homohexamer.</text>
</comment>
<comment type="subcellular location">
    <subcellularLocation>
        <location evidence="1">Cytoplasm</location>
    </subcellularLocation>
</comment>
<comment type="similarity">
    <text evidence="1">Belongs to the UMP kinase family.</text>
</comment>
<accession>Q0BE17</accession>
<gene>
    <name evidence="1" type="primary">pyrH</name>
    <name type="ordered locus">Bamb_2050</name>
</gene>
<reference key="1">
    <citation type="submission" date="2006-08" db="EMBL/GenBank/DDBJ databases">
        <title>Complete sequence of chromosome 1 of Burkholderia cepacia AMMD.</title>
        <authorList>
            <person name="Copeland A."/>
            <person name="Lucas S."/>
            <person name="Lapidus A."/>
            <person name="Barry K."/>
            <person name="Detter J.C."/>
            <person name="Glavina del Rio T."/>
            <person name="Hammon N."/>
            <person name="Israni S."/>
            <person name="Pitluck S."/>
            <person name="Bruce D."/>
            <person name="Chain P."/>
            <person name="Malfatti S."/>
            <person name="Shin M."/>
            <person name="Vergez L."/>
            <person name="Schmutz J."/>
            <person name="Larimer F."/>
            <person name="Land M."/>
            <person name="Hauser L."/>
            <person name="Kyrpides N."/>
            <person name="Kim E."/>
            <person name="Parke J."/>
            <person name="Coenye T."/>
            <person name="Konstantinidis K."/>
            <person name="Ramette A."/>
            <person name="Tiedje J."/>
            <person name="Richardson P."/>
        </authorList>
    </citation>
    <scope>NUCLEOTIDE SEQUENCE [LARGE SCALE GENOMIC DNA]</scope>
    <source>
        <strain>ATCC BAA-244 / DSM 16087 / CCUG 44356 / LMG 19182 / AMMD</strain>
    </source>
</reference>
<dbReference type="EC" id="2.7.4.22" evidence="1"/>
<dbReference type="EMBL" id="CP000440">
    <property type="protein sequence ID" value="ABI87606.1"/>
    <property type="molecule type" value="Genomic_DNA"/>
</dbReference>
<dbReference type="RefSeq" id="WP_006752151.1">
    <property type="nucleotide sequence ID" value="NZ_CP009798.1"/>
</dbReference>
<dbReference type="SMR" id="Q0BE17"/>
<dbReference type="GeneID" id="93085751"/>
<dbReference type="KEGG" id="bam:Bamb_2050"/>
<dbReference type="PATRIC" id="fig|339670.21.peg.2893"/>
<dbReference type="eggNOG" id="COG0528">
    <property type="taxonomic scope" value="Bacteria"/>
</dbReference>
<dbReference type="UniPathway" id="UPA00159">
    <property type="reaction ID" value="UER00275"/>
</dbReference>
<dbReference type="Proteomes" id="UP000000662">
    <property type="component" value="Chromosome 1"/>
</dbReference>
<dbReference type="GO" id="GO:0005829">
    <property type="term" value="C:cytosol"/>
    <property type="evidence" value="ECO:0007669"/>
    <property type="project" value="TreeGrafter"/>
</dbReference>
<dbReference type="GO" id="GO:0005524">
    <property type="term" value="F:ATP binding"/>
    <property type="evidence" value="ECO:0007669"/>
    <property type="project" value="UniProtKB-KW"/>
</dbReference>
<dbReference type="GO" id="GO:0033862">
    <property type="term" value="F:UMP kinase activity"/>
    <property type="evidence" value="ECO:0007669"/>
    <property type="project" value="UniProtKB-EC"/>
</dbReference>
<dbReference type="GO" id="GO:0044210">
    <property type="term" value="P:'de novo' CTP biosynthetic process"/>
    <property type="evidence" value="ECO:0007669"/>
    <property type="project" value="UniProtKB-UniRule"/>
</dbReference>
<dbReference type="GO" id="GO:0006225">
    <property type="term" value="P:UDP biosynthetic process"/>
    <property type="evidence" value="ECO:0007669"/>
    <property type="project" value="TreeGrafter"/>
</dbReference>
<dbReference type="CDD" id="cd04254">
    <property type="entry name" value="AAK_UMPK-PyrH-Ec"/>
    <property type="match status" value="1"/>
</dbReference>
<dbReference type="FunFam" id="3.40.1160.10:FF:000001">
    <property type="entry name" value="Uridylate kinase"/>
    <property type="match status" value="1"/>
</dbReference>
<dbReference type="Gene3D" id="3.40.1160.10">
    <property type="entry name" value="Acetylglutamate kinase-like"/>
    <property type="match status" value="1"/>
</dbReference>
<dbReference type="HAMAP" id="MF_01220_B">
    <property type="entry name" value="PyrH_B"/>
    <property type="match status" value="1"/>
</dbReference>
<dbReference type="InterPro" id="IPR036393">
    <property type="entry name" value="AceGlu_kinase-like_sf"/>
</dbReference>
<dbReference type="InterPro" id="IPR001048">
    <property type="entry name" value="Asp/Glu/Uridylate_kinase"/>
</dbReference>
<dbReference type="InterPro" id="IPR011817">
    <property type="entry name" value="Uridylate_kinase"/>
</dbReference>
<dbReference type="InterPro" id="IPR015963">
    <property type="entry name" value="Uridylate_kinase_bac"/>
</dbReference>
<dbReference type="NCBIfam" id="TIGR02075">
    <property type="entry name" value="pyrH_bact"/>
    <property type="match status" value="1"/>
</dbReference>
<dbReference type="PANTHER" id="PTHR42833">
    <property type="entry name" value="URIDYLATE KINASE"/>
    <property type="match status" value="1"/>
</dbReference>
<dbReference type="PANTHER" id="PTHR42833:SF4">
    <property type="entry name" value="URIDYLATE KINASE PUMPKIN, CHLOROPLASTIC"/>
    <property type="match status" value="1"/>
</dbReference>
<dbReference type="Pfam" id="PF00696">
    <property type="entry name" value="AA_kinase"/>
    <property type="match status" value="1"/>
</dbReference>
<dbReference type="PIRSF" id="PIRSF005650">
    <property type="entry name" value="Uridylate_kin"/>
    <property type="match status" value="1"/>
</dbReference>
<dbReference type="SUPFAM" id="SSF53633">
    <property type="entry name" value="Carbamate kinase-like"/>
    <property type="match status" value="1"/>
</dbReference>
<protein>
    <recommendedName>
        <fullName evidence="1">Uridylate kinase</fullName>
        <shortName evidence="1">UK</shortName>
        <ecNumber evidence="1">2.7.4.22</ecNumber>
    </recommendedName>
    <alternativeName>
        <fullName evidence="1">Uridine monophosphate kinase</fullName>
        <shortName evidence="1">UMP kinase</shortName>
        <shortName evidence="1">UMPK</shortName>
    </alternativeName>
</protein>
<organism>
    <name type="scientific">Burkholderia ambifaria (strain ATCC BAA-244 / DSM 16087 / CCUG 44356 / LMG 19182 / AMMD)</name>
    <name type="common">Burkholderia cepacia (strain AMMD)</name>
    <dbReference type="NCBI Taxonomy" id="339670"/>
    <lineage>
        <taxon>Bacteria</taxon>
        <taxon>Pseudomonadati</taxon>
        <taxon>Pseudomonadota</taxon>
        <taxon>Betaproteobacteria</taxon>
        <taxon>Burkholderiales</taxon>
        <taxon>Burkholderiaceae</taxon>
        <taxon>Burkholderia</taxon>
        <taxon>Burkholderia cepacia complex</taxon>
    </lineage>
</organism>
<keyword id="KW-0067">ATP-binding</keyword>
<keyword id="KW-0963">Cytoplasm</keyword>
<keyword id="KW-0418">Kinase</keyword>
<keyword id="KW-0547">Nucleotide-binding</keyword>
<keyword id="KW-0665">Pyrimidine biosynthesis</keyword>
<keyword id="KW-0808">Transferase</keyword>
<name>PYRH_BURCM</name>
<sequence length="237" mass="25203">MSNAYKRVLLKLSGEALMGDDAFGINRATIERMVADIAEVVGLGTQLAVVIGGGNIFRGVAGGAAGMDRATADYMGMLATMMNALALQDAMRHAGIVARVQSALRMDQVVEPYIRPRAIRQLEEGKVVIFAAGTGNPFFTTDTAAALRGSEVGAEVVLKATKVDGVYSADPKKDPSATRYATISFDEAISRNLQVMDATAFALCRDQKLPIRVFSINKPGALKRIVLGEDEGTLVHV</sequence>
<evidence type="ECO:0000255" key="1">
    <source>
        <dbReference type="HAMAP-Rule" id="MF_01220"/>
    </source>
</evidence>